<reference key="1">
    <citation type="journal article" date="2008" name="Environ. Microbiol.">
        <title>The genome of Erwinia tasmaniensis strain Et1/99, a non-pathogenic bacterium in the genus Erwinia.</title>
        <authorList>
            <person name="Kube M."/>
            <person name="Migdoll A.M."/>
            <person name="Mueller I."/>
            <person name="Kuhl H."/>
            <person name="Beck A."/>
            <person name="Reinhardt R."/>
            <person name="Geider K."/>
        </authorList>
    </citation>
    <scope>NUCLEOTIDE SEQUENCE [LARGE SCALE GENOMIC DNA]</scope>
    <source>
        <strain>DSM 17950 / CFBP 7177 / CIP 109463 / NCPPB 4357 / Et1/99</strain>
    </source>
</reference>
<proteinExistence type="inferred from homology"/>
<gene>
    <name evidence="1" type="primary">deoA</name>
    <name type="ordered locus">ETA_06670</name>
</gene>
<accession>B2VH51</accession>
<sequence length="440" mass="46476">MFLPQEIIRKKRDGHALSDEEIRSFINGVRDNSVSEGQIAALAMAIWFRDITLPERVALTMAMRDSGSVLCWKGLDLNGPVVDKHSTGGVGDVTSLMLGPMVAACGGYVPMISGRGLGHTGGTLDKLEAIPGFDIFPSDDRFREIIKQVGIAIVGQTRSLAPADKRFYATRDITATVDSIPLIAASILGKKLAEGLDALVMDVKVGSGALMPTLEQSEALAQAIFGVANGAGCKTTVLLTDMNQPLASSAGNALEVREAVQFLTGEYRNPRLLEVTMALCREMLLSGGLAQSDAEAQAKLQAVLDNGAAAEAFARMVAAQQGPADFIERIDSYLPAPMLSKAVYATTSGIVSTMDTRALGMAVVALGGGRRRASDSIDYSVGLSHLVQPGDKVDGERPLAVIHAASEASWQQAAQAVQHAVMVGQQQPASTAVIYRRISQ</sequence>
<protein>
    <recommendedName>
        <fullName evidence="1">Thymidine phosphorylase</fullName>
        <ecNumber evidence="1">2.4.2.4</ecNumber>
    </recommendedName>
    <alternativeName>
        <fullName evidence="1">TdRPase</fullName>
    </alternativeName>
</protein>
<dbReference type="EC" id="2.4.2.4" evidence="1"/>
<dbReference type="EMBL" id="CU468135">
    <property type="protein sequence ID" value="CAO95713.1"/>
    <property type="molecule type" value="Genomic_DNA"/>
</dbReference>
<dbReference type="RefSeq" id="WP_012440415.1">
    <property type="nucleotide sequence ID" value="NC_010694.1"/>
</dbReference>
<dbReference type="SMR" id="B2VH51"/>
<dbReference type="STRING" id="465817.ETA_06670"/>
<dbReference type="KEGG" id="eta:ETA_06670"/>
<dbReference type="eggNOG" id="COG0213">
    <property type="taxonomic scope" value="Bacteria"/>
</dbReference>
<dbReference type="HOGENOM" id="CLU_025040_0_1_6"/>
<dbReference type="OrthoDB" id="9763887at2"/>
<dbReference type="UniPathway" id="UPA00578">
    <property type="reaction ID" value="UER00638"/>
</dbReference>
<dbReference type="Proteomes" id="UP000001726">
    <property type="component" value="Chromosome"/>
</dbReference>
<dbReference type="GO" id="GO:0005829">
    <property type="term" value="C:cytosol"/>
    <property type="evidence" value="ECO:0007669"/>
    <property type="project" value="TreeGrafter"/>
</dbReference>
<dbReference type="GO" id="GO:0004645">
    <property type="term" value="F:1,4-alpha-oligoglucan phosphorylase activity"/>
    <property type="evidence" value="ECO:0007669"/>
    <property type="project" value="InterPro"/>
</dbReference>
<dbReference type="GO" id="GO:0009032">
    <property type="term" value="F:thymidine phosphorylase activity"/>
    <property type="evidence" value="ECO:0007669"/>
    <property type="project" value="UniProtKB-UniRule"/>
</dbReference>
<dbReference type="GO" id="GO:0006206">
    <property type="term" value="P:pyrimidine nucleobase metabolic process"/>
    <property type="evidence" value="ECO:0007669"/>
    <property type="project" value="InterPro"/>
</dbReference>
<dbReference type="GO" id="GO:0046104">
    <property type="term" value="P:thymidine metabolic process"/>
    <property type="evidence" value="ECO:0007669"/>
    <property type="project" value="UniProtKB-UniRule"/>
</dbReference>
<dbReference type="FunFam" id="3.40.1030.10:FF:000001">
    <property type="entry name" value="Thymidine phosphorylase"/>
    <property type="match status" value="1"/>
</dbReference>
<dbReference type="FunFam" id="3.90.1170.30:FF:000001">
    <property type="entry name" value="Thymidine phosphorylase"/>
    <property type="match status" value="1"/>
</dbReference>
<dbReference type="Gene3D" id="3.40.1030.10">
    <property type="entry name" value="Nucleoside phosphorylase/phosphoribosyltransferase catalytic domain"/>
    <property type="match status" value="1"/>
</dbReference>
<dbReference type="Gene3D" id="3.90.1170.30">
    <property type="entry name" value="Pyrimidine nucleoside phosphorylase-like, C-terminal domain"/>
    <property type="match status" value="1"/>
</dbReference>
<dbReference type="Gene3D" id="1.20.970.10">
    <property type="entry name" value="Transferase, Pyrimidine Nucleoside Phosphorylase, Chain C"/>
    <property type="match status" value="1"/>
</dbReference>
<dbReference type="HAMAP" id="MF_01628">
    <property type="entry name" value="Thymid_phosp"/>
    <property type="match status" value="1"/>
</dbReference>
<dbReference type="InterPro" id="IPR000312">
    <property type="entry name" value="Glycosyl_Trfase_fam3"/>
</dbReference>
<dbReference type="InterPro" id="IPR017459">
    <property type="entry name" value="Glycosyl_Trfase_fam3_N_dom"/>
</dbReference>
<dbReference type="InterPro" id="IPR036320">
    <property type="entry name" value="Glycosyl_Trfase_fam3_N_dom_sf"/>
</dbReference>
<dbReference type="InterPro" id="IPR035902">
    <property type="entry name" value="Nuc_phospho_transferase"/>
</dbReference>
<dbReference type="InterPro" id="IPR036566">
    <property type="entry name" value="PYNP-like_C_sf"/>
</dbReference>
<dbReference type="InterPro" id="IPR013102">
    <property type="entry name" value="PYNP_C"/>
</dbReference>
<dbReference type="InterPro" id="IPR018090">
    <property type="entry name" value="Pyrmidine_PPas_bac/euk"/>
</dbReference>
<dbReference type="InterPro" id="IPR017872">
    <property type="entry name" value="Pyrmidine_PPase_CS"/>
</dbReference>
<dbReference type="InterPro" id="IPR000053">
    <property type="entry name" value="Thymidine/pyrmidine_PPase"/>
</dbReference>
<dbReference type="InterPro" id="IPR013465">
    <property type="entry name" value="Thymidine_Pase"/>
</dbReference>
<dbReference type="NCBIfam" id="NF004490">
    <property type="entry name" value="PRK05820.1"/>
    <property type="match status" value="1"/>
</dbReference>
<dbReference type="NCBIfam" id="TIGR02643">
    <property type="entry name" value="T_phosphoryl"/>
    <property type="match status" value="1"/>
</dbReference>
<dbReference type="NCBIfam" id="TIGR02644">
    <property type="entry name" value="Y_phosphoryl"/>
    <property type="match status" value="1"/>
</dbReference>
<dbReference type="PANTHER" id="PTHR10515">
    <property type="entry name" value="THYMIDINE PHOSPHORYLASE"/>
    <property type="match status" value="1"/>
</dbReference>
<dbReference type="PANTHER" id="PTHR10515:SF0">
    <property type="entry name" value="THYMIDINE PHOSPHORYLASE"/>
    <property type="match status" value="1"/>
</dbReference>
<dbReference type="Pfam" id="PF02885">
    <property type="entry name" value="Glycos_trans_3N"/>
    <property type="match status" value="1"/>
</dbReference>
<dbReference type="Pfam" id="PF00591">
    <property type="entry name" value="Glycos_transf_3"/>
    <property type="match status" value="1"/>
</dbReference>
<dbReference type="Pfam" id="PF07831">
    <property type="entry name" value="PYNP_C"/>
    <property type="match status" value="1"/>
</dbReference>
<dbReference type="PIRSF" id="PIRSF000478">
    <property type="entry name" value="TP_PyNP"/>
    <property type="match status" value="1"/>
</dbReference>
<dbReference type="SMART" id="SM00941">
    <property type="entry name" value="PYNP_C"/>
    <property type="match status" value="1"/>
</dbReference>
<dbReference type="SUPFAM" id="SSF52418">
    <property type="entry name" value="Nucleoside phosphorylase/phosphoribosyltransferase catalytic domain"/>
    <property type="match status" value="1"/>
</dbReference>
<dbReference type="SUPFAM" id="SSF47648">
    <property type="entry name" value="Nucleoside phosphorylase/phosphoribosyltransferase N-terminal domain"/>
    <property type="match status" value="1"/>
</dbReference>
<dbReference type="SUPFAM" id="SSF54680">
    <property type="entry name" value="Pyrimidine nucleoside phosphorylase C-terminal domain"/>
    <property type="match status" value="1"/>
</dbReference>
<dbReference type="PROSITE" id="PS00647">
    <property type="entry name" value="THYMID_PHOSPHORYLASE"/>
    <property type="match status" value="1"/>
</dbReference>
<keyword id="KW-0328">Glycosyltransferase</keyword>
<keyword id="KW-1185">Reference proteome</keyword>
<keyword id="KW-0808">Transferase</keyword>
<comment type="function">
    <text evidence="1">The enzymes which catalyze the reversible phosphorolysis of pyrimidine nucleosides are involved in the degradation of these compounds and in their utilization as carbon and energy sources, or in the rescue of pyrimidine bases for nucleotide synthesis.</text>
</comment>
<comment type="catalytic activity">
    <reaction evidence="1">
        <text>thymidine + phosphate = 2-deoxy-alpha-D-ribose 1-phosphate + thymine</text>
        <dbReference type="Rhea" id="RHEA:16037"/>
        <dbReference type="ChEBI" id="CHEBI:17748"/>
        <dbReference type="ChEBI" id="CHEBI:17821"/>
        <dbReference type="ChEBI" id="CHEBI:43474"/>
        <dbReference type="ChEBI" id="CHEBI:57259"/>
        <dbReference type="EC" id="2.4.2.4"/>
    </reaction>
</comment>
<comment type="pathway">
    <text evidence="1">Pyrimidine metabolism; dTMP biosynthesis via salvage pathway; dTMP from thymine: step 1/2.</text>
</comment>
<comment type="subunit">
    <text evidence="1">Homodimer.</text>
</comment>
<comment type="similarity">
    <text evidence="1">Belongs to the thymidine/pyrimidine-nucleoside phosphorylase family.</text>
</comment>
<name>TYPH_ERWT9</name>
<organism>
    <name type="scientific">Erwinia tasmaniensis (strain DSM 17950 / CFBP 7177 / CIP 109463 / NCPPB 4357 / Et1/99)</name>
    <dbReference type="NCBI Taxonomy" id="465817"/>
    <lineage>
        <taxon>Bacteria</taxon>
        <taxon>Pseudomonadati</taxon>
        <taxon>Pseudomonadota</taxon>
        <taxon>Gammaproteobacteria</taxon>
        <taxon>Enterobacterales</taxon>
        <taxon>Erwiniaceae</taxon>
        <taxon>Erwinia</taxon>
    </lineage>
</organism>
<evidence type="ECO:0000255" key="1">
    <source>
        <dbReference type="HAMAP-Rule" id="MF_01628"/>
    </source>
</evidence>
<feature type="chain" id="PRO_1000186260" description="Thymidine phosphorylase">
    <location>
        <begin position="1"/>
        <end position="440"/>
    </location>
</feature>